<sequence>MNGSMGAAGGQVENERAAEVPVSTLEMRTLSPETFLYTEVARSHLGERAGRVIELLLNKGRLSVSELVHLAPELGSKSVRTVLVSLIQLRCVQYLEETTVSGRKITYYYFNEDGFQLMLYAGDIVAAVESQFEADDAKEIAAQIVQNVLALGSLTTKDYMQSLASDVSVNDVASMFVKLVELGFLVPLSNVHYMPLADLWDVLYKKEYNAIPKNSTLSDAKKRAETKAKTKVQFNTLLKNVEMSNVLMTDMQTSMRRVQDNLPLTFNFGRYMKHRRSRQLVQFARSRVGSVPAMIYKVALKITEQCARALSDPLCETGLMQELEEQLAIQEDMALDDEKLPGVTFNAVDISRNLPNNIDLRGTLTSMQRRSQERSTHQGQSHKRLKAEDGMAVAVNHLATVEEEAEGDELLHGSDDDMDMFFDEGDSDPKSVSLINGHLKLLSTGSVPFLIESRPGLFYVPYSKLMPILKEAVYDAIIASTLGPSAHRILRCVRDNSLVSEKVINNTALMREKDIRSVIATLVKYNAVDILEVPRTADRAASRAVFLFKINEKHAYDFMKQNLAWNIANSIHKTEILKEENFTLLSKAQRDDVKGREAELLLPSELNQLKMVNERELNGHARKIRLLSMWEVFKML</sequence>
<comment type="function">
    <text evidence="1">DNA-dependent RNA polymerase catalyzes the transcription of DNA into RNA using the four ribonucleoside triphosphates as substrates. Specific core component of RNA polymerase III which synthesizes small RNAs, such as 5S rRNA and tRNAs (By similarity).</text>
</comment>
<comment type="subunit">
    <text evidence="1">Component of the RNA polymerase III (Pol III) complex consisting of 17 subunits.</text>
</comment>
<comment type="subcellular location">
    <subcellularLocation>
        <location evidence="1">Nucleus</location>
    </subcellularLocation>
</comment>
<comment type="similarity">
    <text evidence="3">Belongs to the RNA polymerase beta chain family.</text>
</comment>
<organism>
    <name type="scientific">Eremothecium gossypii (strain ATCC 10895 / CBS 109.51 / FGSC 9923 / NRRL Y-1056)</name>
    <name type="common">Yeast</name>
    <name type="synonym">Ashbya gossypii</name>
    <dbReference type="NCBI Taxonomy" id="284811"/>
    <lineage>
        <taxon>Eukaryota</taxon>
        <taxon>Fungi</taxon>
        <taxon>Dikarya</taxon>
        <taxon>Ascomycota</taxon>
        <taxon>Saccharomycotina</taxon>
        <taxon>Saccharomycetes</taxon>
        <taxon>Saccharomycetales</taxon>
        <taxon>Saccharomycetaceae</taxon>
        <taxon>Eremothecium</taxon>
    </lineage>
</organism>
<proteinExistence type="inferred from homology"/>
<gene>
    <name type="primary">RPC82</name>
    <name type="synonym">RPC3</name>
    <name type="ordered locus">AEL282W</name>
</gene>
<accession>Q758N7</accession>
<protein>
    <recommendedName>
        <fullName>DNA-directed RNA polymerase III subunit RPC3</fullName>
        <shortName>RNA polymerase III subunit C3</shortName>
    </recommendedName>
</protein>
<evidence type="ECO:0000250" key="1"/>
<evidence type="ECO:0000256" key="2">
    <source>
        <dbReference type="SAM" id="MobiDB-lite"/>
    </source>
</evidence>
<evidence type="ECO:0000305" key="3"/>
<name>RPC3_EREGS</name>
<keyword id="KW-0240">DNA-directed RNA polymerase</keyword>
<keyword id="KW-0539">Nucleus</keyword>
<keyword id="KW-1185">Reference proteome</keyword>
<keyword id="KW-0804">Transcription</keyword>
<keyword id="KW-0862">Zinc</keyword>
<feature type="chain" id="PRO_0000351022" description="DNA-directed RNA polymerase III subunit RPC3">
    <location>
        <begin position="1"/>
        <end position="636"/>
    </location>
</feature>
<feature type="region of interest" description="Disordered" evidence="2">
    <location>
        <begin position="366"/>
        <end position="385"/>
    </location>
</feature>
<feature type="region of interest" description="Leucine-zipper">
    <location>
        <begin position="563"/>
        <end position="584"/>
    </location>
</feature>
<dbReference type="EMBL" id="AE016818">
    <property type="protein sequence ID" value="AAS52402.1"/>
    <property type="molecule type" value="Genomic_DNA"/>
</dbReference>
<dbReference type="RefSeq" id="NP_984578.1">
    <property type="nucleotide sequence ID" value="NM_209931.1"/>
</dbReference>
<dbReference type="SMR" id="Q758N7"/>
<dbReference type="FunCoup" id="Q758N7">
    <property type="interactions" value="533"/>
</dbReference>
<dbReference type="STRING" id="284811.Q758N7"/>
<dbReference type="EnsemblFungi" id="AAS52402">
    <property type="protein sequence ID" value="AAS52402"/>
    <property type="gene ID" value="AGOS_AEL282W"/>
</dbReference>
<dbReference type="GeneID" id="4620758"/>
<dbReference type="KEGG" id="ago:AGOS_AEL282W"/>
<dbReference type="eggNOG" id="KOG2587">
    <property type="taxonomic scope" value="Eukaryota"/>
</dbReference>
<dbReference type="HOGENOM" id="CLU_010734_0_0_1"/>
<dbReference type="InParanoid" id="Q758N7"/>
<dbReference type="OMA" id="KHRFVRH"/>
<dbReference type="OrthoDB" id="272392at2759"/>
<dbReference type="Proteomes" id="UP000000591">
    <property type="component" value="Chromosome V"/>
</dbReference>
<dbReference type="GO" id="GO:0005666">
    <property type="term" value="C:RNA polymerase III complex"/>
    <property type="evidence" value="ECO:0000318"/>
    <property type="project" value="GO_Central"/>
</dbReference>
<dbReference type="GO" id="GO:0003899">
    <property type="term" value="F:DNA-directed RNA polymerase activity"/>
    <property type="evidence" value="ECO:0007669"/>
    <property type="project" value="EnsemblFungi"/>
</dbReference>
<dbReference type="GO" id="GO:0003697">
    <property type="term" value="F:single-stranded DNA binding"/>
    <property type="evidence" value="ECO:0007669"/>
    <property type="project" value="InterPro"/>
</dbReference>
<dbReference type="GO" id="GO:0006386">
    <property type="term" value="P:termination of RNA polymerase III transcription"/>
    <property type="evidence" value="ECO:0007669"/>
    <property type="project" value="EnsemblFungi"/>
</dbReference>
<dbReference type="GO" id="GO:0006384">
    <property type="term" value="P:transcription initiation at RNA polymerase III promoter"/>
    <property type="evidence" value="ECO:0007669"/>
    <property type="project" value="EnsemblFungi"/>
</dbReference>
<dbReference type="GO" id="GO:0042797">
    <property type="term" value="P:tRNA transcription by RNA polymerase III"/>
    <property type="evidence" value="ECO:0007669"/>
    <property type="project" value="EnsemblFungi"/>
</dbReference>
<dbReference type="FunFam" id="1.10.10.10:FF:000694">
    <property type="entry name" value="DNA-directed RNA polymerase III subunit RPC3"/>
    <property type="match status" value="1"/>
</dbReference>
<dbReference type="FunFam" id="1.10.10.10:FF:000695">
    <property type="entry name" value="DNA-directed RNA polymerase III subunit RPC3"/>
    <property type="match status" value="1"/>
</dbReference>
<dbReference type="Gene3D" id="1.10.10.10">
    <property type="entry name" value="Winged helix-like DNA-binding domain superfamily/Winged helix DNA-binding domain"/>
    <property type="match status" value="2"/>
</dbReference>
<dbReference type="InterPro" id="IPR055207">
    <property type="entry name" value="POLR3C_WHD"/>
</dbReference>
<dbReference type="InterPro" id="IPR013197">
    <property type="entry name" value="RNA_pol_III_RPC82-rel_HTH"/>
</dbReference>
<dbReference type="InterPro" id="IPR008806">
    <property type="entry name" value="RNA_pol_III_Rpc82_C"/>
</dbReference>
<dbReference type="InterPro" id="IPR039748">
    <property type="entry name" value="RPC3"/>
</dbReference>
<dbReference type="InterPro" id="IPR036388">
    <property type="entry name" value="WH-like_DNA-bd_sf"/>
</dbReference>
<dbReference type="InterPro" id="IPR036390">
    <property type="entry name" value="WH_DNA-bd_sf"/>
</dbReference>
<dbReference type="PANTHER" id="PTHR12949:SF0">
    <property type="entry name" value="DNA-DIRECTED RNA POLYMERASE III SUBUNIT RPC3"/>
    <property type="match status" value="1"/>
</dbReference>
<dbReference type="PANTHER" id="PTHR12949">
    <property type="entry name" value="RNA POLYMERASE III DNA DIRECTED -RELATED"/>
    <property type="match status" value="1"/>
</dbReference>
<dbReference type="Pfam" id="PF08221">
    <property type="entry name" value="HTH_9"/>
    <property type="match status" value="1"/>
</dbReference>
<dbReference type="Pfam" id="PF22536">
    <property type="entry name" value="POLR3C_WHD"/>
    <property type="match status" value="1"/>
</dbReference>
<dbReference type="Pfam" id="PF05645">
    <property type="entry name" value="RNA_pol_Rpc82"/>
    <property type="match status" value="1"/>
</dbReference>
<dbReference type="Pfam" id="PF20912">
    <property type="entry name" value="RPC3_helical"/>
    <property type="match status" value="1"/>
</dbReference>
<dbReference type="SUPFAM" id="SSF46785">
    <property type="entry name" value="Winged helix' DNA-binding domain"/>
    <property type="match status" value="1"/>
</dbReference>
<reference key="1">
    <citation type="journal article" date="2004" name="Science">
        <title>The Ashbya gossypii genome as a tool for mapping the ancient Saccharomyces cerevisiae genome.</title>
        <authorList>
            <person name="Dietrich F.S."/>
            <person name="Voegeli S."/>
            <person name="Brachat S."/>
            <person name="Lerch A."/>
            <person name="Gates K."/>
            <person name="Steiner S."/>
            <person name="Mohr C."/>
            <person name="Poehlmann R."/>
            <person name="Luedi P."/>
            <person name="Choi S."/>
            <person name="Wing R.A."/>
            <person name="Flavier A."/>
            <person name="Gaffney T.D."/>
            <person name="Philippsen P."/>
        </authorList>
    </citation>
    <scope>NUCLEOTIDE SEQUENCE [LARGE SCALE GENOMIC DNA]</scope>
    <source>
        <strain>ATCC 10895 / CBS 109.51 / FGSC 9923 / NRRL Y-1056</strain>
    </source>
</reference>
<reference key="2">
    <citation type="journal article" date="2013" name="G3 (Bethesda)">
        <title>Genomes of Ashbya fungi isolated from insects reveal four mating-type loci, numerous translocations, lack of transposons, and distinct gene duplications.</title>
        <authorList>
            <person name="Dietrich F.S."/>
            <person name="Voegeli S."/>
            <person name="Kuo S."/>
            <person name="Philippsen P."/>
        </authorList>
    </citation>
    <scope>GENOME REANNOTATION</scope>
    <source>
        <strain>ATCC 10895 / CBS 109.51 / FGSC 9923 / NRRL Y-1056</strain>
    </source>
</reference>